<gene>
    <name evidence="2" type="primary">rnj</name>
    <name type="ordered locus">Cgl1970</name>
    <name type="ordered locus">cg2160</name>
</gene>
<dbReference type="EC" id="3.1.-.-" evidence="2"/>
<dbReference type="EMBL" id="X95649">
    <property type="protein sequence ID" value="CAC19480.1"/>
    <property type="molecule type" value="Genomic_DNA"/>
</dbReference>
<dbReference type="EMBL" id="BA000036">
    <property type="protein sequence ID" value="BAB99363.1"/>
    <property type="molecule type" value="Genomic_DNA"/>
</dbReference>
<dbReference type="EMBL" id="BX927153">
    <property type="protein sequence ID" value="CAF20311.1"/>
    <property type="molecule type" value="Genomic_DNA"/>
</dbReference>
<dbReference type="RefSeq" id="NP_601176.1">
    <property type="nucleotide sequence ID" value="NC_003450.3"/>
</dbReference>
<dbReference type="RefSeq" id="WP_011014791.1">
    <property type="nucleotide sequence ID" value="NC_006958.1"/>
</dbReference>
<dbReference type="SMR" id="P54122"/>
<dbReference type="STRING" id="196627.cg2160"/>
<dbReference type="KEGG" id="cgb:cg2160"/>
<dbReference type="KEGG" id="cgl:Cgl1970"/>
<dbReference type="PATRIC" id="fig|196627.13.peg.1907"/>
<dbReference type="eggNOG" id="COG0595">
    <property type="taxonomic scope" value="Bacteria"/>
</dbReference>
<dbReference type="HOGENOM" id="CLU_008727_3_2_11"/>
<dbReference type="OrthoDB" id="9770211at2"/>
<dbReference type="BioCyc" id="CORYNE:G18NG-11562-MONOMER"/>
<dbReference type="Proteomes" id="UP000000582">
    <property type="component" value="Chromosome"/>
</dbReference>
<dbReference type="Proteomes" id="UP000001009">
    <property type="component" value="Chromosome"/>
</dbReference>
<dbReference type="GO" id="GO:0005737">
    <property type="term" value="C:cytoplasm"/>
    <property type="evidence" value="ECO:0007669"/>
    <property type="project" value="UniProtKB-SubCell"/>
</dbReference>
<dbReference type="GO" id="GO:0004534">
    <property type="term" value="F:5'-3' RNA exonuclease activity"/>
    <property type="evidence" value="ECO:0007669"/>
    <property type="project" value="UniProtKB-UniRule"/>
</dbReference>
<dbReference type="GO" id="GO:0003723">
    <property type="term" value="F:RNA binding"/>
    <property type="evidence" value="ECO:0007669"/>
    <property type="project" value="UniProtKB-UniRule"/>
</dbReference>
<dbReference type="GO" id="GO:0004521">
    <property type="term" value="F:RNA endonuclease activity"/>
    <property type="evidence" value="ECO:0007669"/>
    <property type="project" value="UniProtKB-UniRule"/>
</dbReference>
<dbReference type="GO" id="GO:0008270">
    <property type="term" value="F:zinc ion binding"/>
    <property type="evidence" value="ECO:0007669"/>
    <property type="project" value="InterPro"/>
</dbReference>
<dbReference type="GO" id="GO:0006364">
    <property type="term" value="P:rRNA processing"/>
    <property type="evidence" value="ECO:0007669"/>
    <property type="project" value="UniProtKB-UniRule"/>
</dbReference>
<dbReference type="CDD" id="cd07714">
    <property type="entry name" value="RNaseJ_MBL-fold"/>
    <property type="match status" value="1"/>
</dbReference>
<dbReference type="Gene3D" id="3.10.20.580">
    <property type="match status" value="1"/>
</dbReference>
<dbReference type="Gene3D" id="3.40.50.10710">
    <property type="entry name" value="Metallo-hydrolase/oxidoreductase"/>
    <property type="match status" value="1"/>
</dbReference>
<dbReference type="Gene3D" id="3.60.15.10">
    <property type="entry name" value="Ribonuclease Z/Hydroxyacylglutathione hydrolase-like"/>
    <property type="match status" value="1"/>
</dbReference>
<dbReference type="HAMAP" id="MF_01491">
    <property type="entry name" value="RNase_J_bact"/>
    <property type="match status" value="1"/>
</dbReference>
<dbReference type="InterPro" id="IPR001279">
    <property type="entry name" value="Metallo-B-lactamas"/>
</dbReference>
<dbReference type="InterPro" id="IPR036866">
    <property type="entry name" value="RibonucZ/Hydroxyglut_hydro"/>
</dbReference>
<dbReference type="InterPro" id="IPR011108">
    <property type="entry name" value="RMMBL"/>
</dbReference>
<dbReference type="InterPro" id="IPR004613">
    <property type="entry name" value="RNase_J"/>
</dbReference>
<dbReference type="InterPro" id="IPR042173">
    <property type="entry name" value="RNase_J_2"/>
</dbReference>
<dbReference type="InterPro" id="IPR055132">
    <property type="entry name" value="RNase_J_b_CASP"/>
</dbReference>
<dbReference type="InterPro" id="IPR030854">
    <property type="entry name" value="RNase_J_bac"/>
</dbReference>
<dbReference type="InterPro" id="IPR041636">
    <property type="entry name" value="RNase_J_C"/>
</dbReference>
<dbReference type="InterPro" id="IPR001587">
    <property type="entry name" value="RNase_J_CS"/>
</dbReference>
<dbReference type="NCBIfam" id="TIGR00649">
    <property type="entry name" value="MG423"/>
    <property type="match status" value="1"/>
</dbReference>
<dbReference type="PANTHER" id="PTHR43694">
    <property type="entry name" value="RIBONUCLEASE J"/>
    <property type="match status" value="1"/>
</dbReference>
<dbReference type="PANTHER" id="PTHR43694:SF1">
    <property type="entry name" value="RIBONUCLEASE J"/>
    <property type="match status" value="1"/>
</dbReference>
<dbReference type="Pfam" id="PF12706">
    <property type="entry name" value="Lactamase_B_2"/>
    <property type="match status" value="1"/>
</dbReference>
<dbReference type="Pfam" id="PF07521">
    <property type="entry name" value="RMMBL"/>
    <property type="match status" value="1"/>
</dbReference>
<dbReference type="Pfam" id="PF22505">
    <property type="entry name" value="RNase_J_b_CASP"/>
    <property type="match status" value="1"/>
</dbReference>
<dbReference type="Pfam" id="PF17770">
    <property type="entry name" value="RNase_J_C"/>
    <property type="match status" value="1"/>
</dbReference>
<dbReference type="SMART" id="SM00849">
    <property type="entry name" value="Lactamase_B"/>
    <property type="match status" value="1"/>
</dbReference>
<dbReference type="SUPFAM" id="SSF56281">
    <property type="entry name" value="Metallo-hydrolase/oxidoreductase"/>
    <property type="match status" value="1"/>
</dbReference>
<dbReference type="PROSITE" id="PS01292">
    <property type="entry name" value="UPF0036"/>
    <property type="match status" value="1"/>
</dbReference>
<keyword id="KW-0963">Cytoplasm</keyword>
<keyword id="KW-0255">Endonuclease</keyword>
<keyword id="KW-0269">Exonuclease</keyword>
<keyword id="KW-0378">Hydrolase</keyword>
<keyword id="KW-0479">Metal-binding</keyword>
<keyword id="KW-0540">Nuclease</keyword>
<keyword id="KW-1185">Reference proteome</keyword>
<keyword id="KW-0694">RNA-binding</keyword>
<keyword id="KW-0698">rRNA processing</keyword>
<keyword id="KW-0862">Zinc</keyword>
<comment type="function">
    <text evidence="1">An RNase that has 5'-3' exonuclease and possibly endoonuclease activity. Involved in maturation of rRNA and in some organisms also mRNA maturation and/or decay (By similarity).</text>
</comment>
<comment type="cofactor">
    <cofactor evidence="2">
        <name>Zn(2+)</name>
        <dbReference type="ChEBI" id="CHEBI:29105"/>
    </cofactor>
    <text evidence="2">Binds up to 2 Zn(2+) ions per subunit. It is not clear if Zn(2+) or Mg(2+) is physiologically important.</text>
</comment>
<comment type="subunit">
    <text evidence="2">Homodimer, may be a subunit of the RNA degradosome.</text>
</comment>
<comment type="subcellular location">
    <subcellularLocation>
        <location evidence="2">Cytoplasm</location>
    </subcellularLocation>
</comment>
<comment type="similarity">
    <text evidence="2">Belongs to the metallo-beta-lactamase superfamily. RNA-metabolizing metallo-beta-lactamase-like family. Bacterial RNase J subfamily.</text>
</comment>
<feature type="chain" id="PRO_0000215274" description="Ribonuclease J">
    <location>
        <begin position="1"/>
        <end position="718"/>
    </location>
</feature>
<feature type="region of interest" description="Disordered" evidence="3">
    <location>
        <begin position="1"/>
        <end position="130"/>
    </location>
</feature>
<feature type="compositionally biased region" description="Low complexity" evidence="3">
    <location>
        <begin position="55"/>
        <end position="91"/>
    </location>
</feature>
<feature type="compositionally biased region" description="Low complexity" evidence="3">
    <location>
        <begin position="100"/>
        <end position="118"/>
    </location>
</feature>
<feature type="binding site" evidence="2">
    <location>
        <position position="220"/>
    </location>
    <ligand>
        <name>Zn(2+)</name>
        <dbReference type="ChEBI" id="CHEBI:29105"/>
        <label>1</label>
        <note>catalytic</note>
    </ligand>
</feature>
<feature type="binding site" evidence="2">
    <location>
        <position position="222"/>
    </location>
    <ligand>
        <name>Zn(2+)</name>
        <dbReference type="ChEBI" id="CHEBI:29105"/>
        <label>1</label>
        <note>catalytic</note>
    </ligand>
</feature>
<feature type="binding site" evidence="2">
    <location>
        <position position="224"/>
    </location>
    <ligand>
        <name>Zn(2+)</name>
        <dbReference type="ChEBI" id="CHEBI:29105"/>
        <label>2</label>
        <note>catalytic</note>
    </ligand>
</feature>
<feature type="binding site" evidence="2">
    <location>
        <position position="225"/>
    </location>
    <ligand>
        <name>Zn(2+)</name>
        <dbReference type="ChEBI" id="CHEBI:29105"/>
        <label>2</label>
        <note>catalytic</note>
    </ligand>
</feature>
<feature type="binding site" evidence="2">
    <location>
        <position position="287"/>
    </location>
    <ligand>
        <name>Zn(2+)</name>
        <dbReference type="ChEBI" id="CHEBI:29105"/>
        <label>1</label>
        <note>catalytic</note>
    </ligand>
</feature>
<feature type="binding site" evidence="2">
    <location>
        <position position="309"/>
    </location>
    <ligand>
        <name>Zn(2+)</name>
        <dbReference type="ChEBI" id="CHEBI:29105"/>
        <label>1</label>
        <note>catalytic</note>
    </ligand>
</feature>
<feature type="binding site" evidence="2">
    <location>
        <position position="309"/>
    </location>
    <ligand>
        <name>Zn(2+)</name>
        <dbReference type="ChEBI" id="CHEBI:29105"/>
        <label>2</label>
        <note>catalytic</note>
    </ligand>
</feature>
<feature type="binding site" evidence="2">
    <location>
        <begin position="510"/>
        <end position="514"/>
    </location>
    <ligand>
        <name>substrate</name>
    </ligand>
</feature>
<feature type="binding site" evidence="2">
    <location>
        <position position="536"/>
    </location>
    <ligand>
        <name>Zn(2+)</name>
        <dbReference type="ChEBI" id="CHEBI:29105"/>
        <label>2</label>
        <note>catalytic</note>
    </ligand>
</feature>
<organism>
    <name type="scientific">Corynebacterium glutamicum (strain ATCC 13032 / DSM 20300 / JCM 1318 / BCRC 11384 / CCUG 27702 / LMG 3730 / NBRC 12168 / NCIMB 10025 / NRRL B-2784 / 534)</name>
    <dbReference type="NCBI Taxonomy" id="196627"/>
    <lineage>
        <taxon>Bacteria</taxon>
        <taxon>Bacillati</taxon>
        <taxon>Actinomycetota</taxon>
        <taxon>Actinomycetes</taxon>
        <taxon>Mycobacteriales</taxon>
        <taxon>Corynebacteriaceae</taxon>
        <taxon>Corynebacterium</taxon>
    </lineage>
</organism>
<accession>P54122</accession>
<proteinExistence type="inferred from homology"/>
<sequence length="718" mass="77602">MNDSRNRGRKVTRKAGPPEAGQENHLDTPVFQAPDASSNQSAVKAETAGNDNRDAAQGAQGSQDSQGSQNAQGSQNRESGNNNRNRSNNNRRGGRGRRGSGNANEGANNNSGNQNRQGGNRGNRGGGRRNVVKSMQGADLTQRLPEPPKAPANGLRIYALGGISEIGRNMTVFEYNNRLLIVDCGVLFPSSGEPGVDLILPDFGPIEDHLHRVDALVVTHGHEDHIGAIPWLLKLRNDIPILASRFTLALIAAKCKEHRQRPKLIEVNEQSNEDRGPFNIRFWAVNHSIPDCLGLAIKTPAGLVIHTGDIKLDQTPPDGRPTDLPALSRFGDEGVDLMLCDSTNATTPGVSGSEADVAPTLKRLVGDAKQRVILASFASNVYRVQAAVDAAVASNRKVAFNGRSMIRNMEIAEKLGYLKAPRGTIISMDDASRMAPHKVMLITTGTQGEPMAALSRMARREHRQITVRDGDLIILSSSLVPGNEEAVFGVINMLAQIGATVVTGRDAKVHTSGHGYSGELLFLYNAARPKNAMPVHGEWRHLRANKELAISTGVNRDNVVLAQNGVVVDMVNGRAQVVGQIPVGNLYVDGVTMGDIDADILADRTSLGEGGLISITAVIDNRTGRLLERPTVQTSGFSEDAKSMMGEVTELSETTMNDLAAEGENDPYRMVQQLRRKLSRFVEQKWKRQPVIMPTVIPMTAETTHIGDDEVRASRESL</sequence>
<name>RNJ_CORGL</name>
<reference key="1">
    <citation type="journal article" date="1997" name="Biotechnol. Lett.">
        <title>Identification and transcriptional analysis of the dapB-ORF2-dapA-ORF4 operon of Corynebacterium glutamicum, encoding two enzymes involved in L-lysine synthesis.</title>
        <authorList>
            <person name="Patek M."/>
            <person name="Bilic M."/>
            <person name="Krumbach K."/>
            <person name="Eikmanns B."/>
            <person name="Sahm H."/>
            <person name="Eggeling L."/>
        </authorList>
    </citation>
    <scope>NUCLEOTIDE SEQUENCE [GENOMIC DNA]</scope>
    <source>
        <strain>ATCC 13032 / DSM 20300 / JCM 1318 / BCRC 11384 / CCUG 27702 / LMG 3730 / NBRC 12168 / NCIMB 10025 / NRRL B-2784 / 534</strain>
    </source>
</reference>
<reference key="2">
    <citation type="submission" date="2000-12" db="EMBL/GenBank/DDBJ databases">
        <authorList>
            <person name="Eggeling L."/>
        </authorList>
    </citation>
    <scope>SEQUENCE REVISION</scope>
</reference>
<reference key="3">
    <citation type="journal article" date="2003" name="Appl. Microbiol. Biotechnol.">
        <title>The Corynebacterium glutamicum genome: features and impacts on biotechnological processes.</title>
        <authorList>
            <person name="Ikeda M."/>
            <person name="Nakagawa S."/>
        </authorList>
    </citation>
    <scope>NUCLEOTIDE SEQUENCE [LARGE SCALE GENOMIC DNA]</scope>
    <source>
        <strain>ATCC 13032 / DSM 20300 / JCM 1318 / BCRC 11384 / CCUG 27702 / LMG 3730 / NBRC 12168 / NCIMB 10025 / NRRL B-2784 / 534</strain>
    </source>
</reference>
<reference key="4">
    <citation type="journal article" date="2003" name="J. Biotechnol.">
        <title>The complete Corynebacterium glutamicum ATCC 13032 genome sequence and its impact on the production of L-aspartate-derived amino acids and vitamins.</title>
        <authorList>
            <person name="Kalinowski J."/>
            <person name="Bathe B."/>
            <person name="Bartels D."/>
            <person name="Bischoff N."/>
            <person name="Bott M."/>
            <person name="Burkovski A."/>
            <person name="Dusch N."/>
            <person name="Eggeling L."/>
            <person name="Eikmanns B.J."/>
            <person name="Gaigalat L."/>
            <person name="Goesmann A."/>
            <person name="Hartmann M."/>
            <person name="Huthmacher K."/>
            <person name="Kraemer R."/>
            <person name="Linke B."/>
            <person name="McHardy A.C."/>
            <person name="Meyer F."/>
            <person name="Moeckel B."/>
            <person name="Pfefferle W."/>
            <person name="Puehler A."/>
            <person name="Rey D.A."/>
            <person name="Rueckert C."/>
            <person name="Rupp O."/>
            <person name="Sahm H."/>
            <person name="Wendisch V.F."/>
            <person name="Wiegraebe I."/>
            <person name="Tauch A."/>
        </authorList>
    </citation>
    <scope>NUCLEOTIDE SEQUENCE [LARGE SCALE GENOMIC DNA]</scope>
    <source>
        <strain>ATCC 13032 / DSM 20300 / JCM 1318 / BCRC 11384 / CCUG 27702 / LMG 3730 / NBRC 12168 / NCIMB 10025 / NRRL B-2784 / 534</strain>
    </source>
</reference>
<protein>
    <recommendedName>
        <fullName evidence="2">Ribonuclease J</fullName>
        <shortName evidence="2">RNase J</shortName>
        <ecNumber evidence="2">3.1.-.-</ecNumber>
    </recommendedName>
</protein>
<evidence type="ECO:0000250" key="1"/>
<evidence type="ECO:0000255" key="2">
    <source>
        <dbReference type="HAMAP-Rule" id="MF_01491"/>
    </source>
</evidence>
<evidence type="ECO:0000256" key="3">
    <source>
        <dbReference type="SAM" id="MobiDB-lite"/>
    </source>
</evidence>